<comment type="function">
    <text evidence="1">Catalyzes the reversible formation of acyl-phosphate (acyl-PO(4)) from acyl-[acyl-carrier-protein] (acyl-ACP). This enzyme utilizes acyl-ACP as fatty acyl donor, but not acyl-CoA.</text>
</comment>
<comment type="catalytic activity">
    <reaction evidence="1">
        <text>a fatty acyl-[ACP] + phosphate = an acyl phosphate + holo-[ACP]</text>
        <dbReference type="Rhea" id="RHEA:42292"/>
        <dbReference type="Rhea" id="RHEA-COMP:9685"/>
        <dbReference type="Rhea" id="RHEA-COMP:14125"/>
        <dbReference type="ChEBI" id="CHEBI:43474"/>
        <dbReference type="ChEBI" id="CHEBI:59918"/>
        <dbReference type="ChEBI" id="CHEBI:64479"/>
        <dbReference type="ChEBI" id="CHEBI:138651"/>
        <dbReference type="EC" id="2.3.1.274"/>
    </reaction>
</comment>
<comment type="pathway">
    <text evidence="1">Lipid metabolism; phospholipid metabolism.</text>
</comment>
<comment type="subunit">
    <text evidence="1">Homodimer. Probably interacts with PlsY.</text>
</comment>
<comment type="subcellular location">
    <subcellularLocation>
        <location evidence="1">Cytoplasm</location>
    </subcellularLocation>
    <text evidence="1">Associated with the membrane possibly through PlsY.</text>
</comment>
<comment type="similarity">
    <text evidence="1">Belongs to the PlsX family.</text>
</comment>
<feature type="chain" id="PRO_1000001814" description="Phosphate acyltransferase">
    <location>
        <begin position="1"/>
        <end position="353"/>
    </location>
</feature>
<gene>
    <name evidence="1" type="primary">plsX</name>
    <name type="ordered locus">RPC_2675</name>
</gene>
<reference key="1">
    <citation type="submission" date="2006-03" db="EMBL/GenBank/DDBJ databases">
        <title>Complete sequence of Rhodopseudomonas palustris BisB18.</title>
        <authorList>
            <consortium name="US DOE Joint Genome Institute"/>
            <person name="Copeland A."/>
            <person name="Lucas S."/>
            <person name="Lapidus A."/>
            <person name="Barry K."/>
            <person name="Detter J.C."/>
            <person name="Glavina del Rio T."/>
            <person name="Hammon N."/>
            <person name="Israni S."/>
            <person name="Dalin E."/>
            <person name="Tice H."/>
            <person name="Pitluck S."/>
            <person name="Chain P."/>
            <person name="Malfatti S."/>
            <person name="Shin M."/>
            <person name="Vergez L."/>
            <person name="Schmutz J."/>
            <person name="Larimer F."/>
            <person name="Land M."/>
            <person name="Hauser L."/>
            <person name="Pelletier D.A."/>
            <person name="Kyrpides N."/>
            <person name="Anderson I."/>
            <person name="Oda Y."/>
            <person name="Harwood C.S."/>
            <person name="Richardson P."/>
        </authorList>
    </citation>
    <scope>NUCLEOTIDE SEQUENCE [LARGE SCALE GENOMIC DNA]</scope>
    <source>
        <strain>BisB18</strain>
    </source>
</reference>
<proteinExistence type="inferred from homology"/>
<accession>Q214G2</accession>
<organism>
    <name type="scientific">Rhodopseudomonas palustris (strain BisB18)</name>
    <dbReference type="NCBI Taxonomy" id="316056"/>
    <lineage>
        <taxon>Bacteria</taxon>
        <taxon>Pseudomonadati</taxon>
        <taxon>Pseudomonadota</taxon>
        <taxon>Alphaproteobacteria</taxon>
        <taxon>Hyphomicrobiales</taxon>
        <taxon>Nitrobacteraceae</taxon>
        <taxon>Rhodopseudomonas</taxon>
    </lineage>
</organism>
<name>PLSX_RHOPB</name>
<protein>
    <recommendedName>
        <fullName evidence="1">Phosphate acyltransferase</fullName>
        <ecNumber evidence="1">2.3.1.274</ecNumber>
    </recommendedName>
    <alternativeName>
        <fullName evidence="1">Acyl-ACP phosphotransacylase</fullName>
    </alternativeName>
    <alternativeName>
        <fullName evidence="1">Acyl-[acyl-carrier-protein]--phosphate acyltransferase</fullName>
    </alternativeName>
    <alternativeName>
        <fullName evidence="1">Phosphate-acyl-ACP acyltransferase</fullName>
    </alternativeName>
</protein>
<evidence type="ECO:0000255" key="1">
    <source>
        <dbReference type="HAMAP-Rule" id="MF_00019"/>
    </source>
</evidence>
<keyword id="KW-0963">Cytoplasm</keyword>
<keyword id="KW-0444">Lipid biosynthesis</keyword>
<keyword id="KW-0443">Lipid metabolism</keyword>
<keyword id="KW-0594">Phospholipid biosynthesis</keyword>
<keyword id="KW-1208">Phospholipid metabolism</keyword>
<keyword id="KW-0808">Transferase</keyword>
<dbReference type="EC" id="2.3.1.274" evidence="1"/>
<dbReference type="EMBL" id="CP000301">
    <property type="protein sequence ID" value="ABD88224.1"/>
    <property type="molecule type" value="Genomic_DNA"/>
</dbReference>
<dbReference type="SMR" id="Q214G2"/>
<dbReference type="STRING" id="316056.RPC_2675"/>
<dbReference type="KEGG" id="rpc:RPC_2675"/>
<dbReference type="eggNOG" id="COG0416">
    <property type="taxonomic scope" value="Bacteria"/>
</dbReference>
<dbReference type="HOGENOM" id="CLU_039379_1_0_5"/>
<dbReference type="OrthoDB" id="9806408at2"/>
<dbReference type="UniPathway" id="UPA00085"/>
<dbReference type="GO" id="GO:0005737">
    <property type="term" value="C:cytoplasm"/>
    <property type="evidence" value="ECO:0007669"/>
    <property type="project" value="UniProtKB-SubCell"/>
</dbReference>
<dbReference type="GO" id="GO:0043811">
    <property type="term" value="F:phosphate:acyl-[acyl carrier protein] acyltransferase activity"/>
    <property type="evidence" value="ECO:0007669"/>
    <property type="project" value="UniProtKB-UniRule"/>
</dbReference>
<dbReference type="GO" id="GO:0006633">
    <property type="term" value="P:fatty acid biosynthetic process"/>
    <property type="evidence" value="ECO:0007669"/>
    <property type="project" value="UniProtKB-UniRule"/>
</dbReference>
<dbReference type="GO" id="GO:0008654">
    <property type="term" value="P:phospholipid biosynthetic process"/>
    <property type="evidence" value="ECO:0007669"/>
    <property type="project" value="UniProtKB-KW"/>
</dbReference>
<dbReference type="Gene3D" id="3.40.718.10">
    <property type="entry name" value="Isopropylmalate Dehydrogenase"/>
    <property type="match status" value="1"/>
</dbReference>
<dbReference type="HAMAP" id="MF_00019">
    <property type="entry name" value="PlsX"/>
    <property type="match status" value="1"/>
</dbReference>
<dbReference type="InterPro" id="IPR003664">
    <property type="entry name" value="FA_synthesis"/>
</dbReference>
<dbReference type="InterPro" id="IPR012281">
    <property type="entry name" value="Phospholipid_synth_PlsX-like"/>
</dbReference>
<dbReference type="NCBIfam" id="TIGR00182">
    <property type="entry name" value="plsX"/>
    <property type="match status" value="1"/>
</dbReference>
<dbReference type="PANTHER" id="PTHR30100">
    <property type="entry name" value="FATTY ACID/PHOSPHOLIPID SYNTHESIS PROTEIN PLSX"/>
    <property type="match status" value="1"/>
</dbReference>
<dbReference type="PANTHER" id="PTHR30100:SF1">
    <property type="entry name" value="PHOSPHATE ACYLTRANSFERASE"/>
    <property type="match status" value="1"/>
</dbReference>
<dbReference type="Pfam" id="PF02504">
    <property type="entry name" value="FA_synthesis"/>
    <property type="match status" value="1"/>
</dbReference>
<dbReference type="PIRSF" id="PIRSF002465">
    <property type="entry name" value="Phsphlp_syn_PlsX"/>
    <property type="match status" value="1"/>
</dbReference>
<dbReference type="SUPFAM" id="SSF53659">
    <property type="entry name" value="Isocitrate/Isopropylmalate dehydrogenase-like"/>
    <property type="match status" value="1"/>
</dbReference>
<sequence length="353" mass="37332">MSQKVRIALDAMGGDFGASVVVPGAAISLTRHPDSEFLLFGDSALINKQLDLHPALQKVSRVFHTDIAVSMHDKPSQALRRGRKVSSMWLAIEAVKKGEADVAVSAGNTGALMAMARFCLRTLPGIDRPAIAAIWPTIRGDSVVLDLGATIGGDAEHLKALAVMGSAMASVLFDLERPTVGLLNIGVEEIKGGEEIRAAAELLREMNSPQFEFIGFVEGDGIGKGAADVIVSEGFSGNIALKAAEGTARQISEYLKAAMSRTWRSKIGYLFAREAFRSLRDKMDPNKSNGGVFLGLNGVVVKSHGGTSADGFAYAVDVGYDMVRYDLLNKINQTLNRGGGALGGTPTAREAVS</sequence>